<dbReference type="EC" id="4.2.1.33" evidence="1"/>
<dbReference type="EMBL" id="CP000750">
    <property type="protein sequence ID" value="ABS02847.1"/>
    <property type="molecule type" value="Genomic_DNA"/>
</dbReference>
<dbReference type="RefSeq" id="WP_012084290.1">
    <property type="nucleotide sequence ID" value="NC_009664.2"/>
</dbReference>
<dbReference type="SMR" id="A6W7Q8"/>
<dbReference type="STRING" id="266940.Krad_1359"/>
<dbReference type="KEGG" id="kra:Krad_1359"/>
<dbReference type="eggNOG" id="COG0066">
    <property type="taxonomic scope" value="Bacteria"/>
</dbReference>
<dbReference type="HOGENOM" id="CLU_081378_0_1_11"/>
<dbReference type="OrthoDB" id="9777465at2"/>
<dbReference type="UniPathway" id="UPA00048">
    <property type="reaction ID" value="UER00071"/>
</dbReference>
<dbReference type="Proteomes" id="UP000001116">
    <property type="component" value="Chromosome"/>
</dbReference>
<dbReference type="GO" id="GO:0009316">
    <property type="term" value="C:3-isopropylmalate dehydratase complex"/>
    <property type="evidence" value="ECO:0007669"/>
    <property type="project" value="InterPro"/>
</dbReference>
<dbReference type="GO" id="GO:0003861">
    <property type="term" value="F:3-isopropylmalate dehydratase activity"/>
    <property type="evidence" value="ECO:0007669"/>
    <property type="project" value="UniProtKB-UniRule"/>
</dbReference>
<dbReference type="GO" id="GO:0009098">
    <property type="term" value="P:L-leucine biosynthetic process"/>
    <property type="evidence" value="ECO:0007669"/>
    <property type="project" value="UniProtKB-UniRule"/>
</dbReference>
<dbReference type="CDD" id="cd01577">
    <property type="entry name" value="IPMI_Swivel"/>
    <property type="match status" value="1"/>
</dbReference>
<dbReference type="FunFam" id="3.20.19.10:FF:000003">
    <property type="entry name" value="3-isopropylmalate dehydratase small subunit"/>
    <property type="match status" value="1"/>
</dbReference>
<dbReference type="Gene3D" id="3.20.19.10">
    <property type="entry name" value="Aconitase, domain 4"/>
    <property type="match status" value="1"/>
</dbReference>
<dbReference type="HAMAP" id="MF_01031">
    <property type="entry name" value="LeuD_type1"/>
    <property type="match status" value="1"/>
</dbReference>
<dbReference type="InterPro" id="IPR004431">
    <property type="entry name" value="3-IsopropMal_deHydase_ssu"/>
</dbReference>
<dbReference type="InterPro" id="IPR015928">
    <property type="entry name" value="Aconitase/3IPM_dehydase_swvl"/>
</dbReference>
<dbReference type="InterPro" id="IPR000573">
    <property type="entry name" value="AconitaseA/IPMdHydase_ssu_swvl"/>
</dbReference>
<dbReference type="InterPro" id="IPR033940">
    <property type="entry name" value="IPMI_Swivel"/>
</dbReference>
<dbReference type="InterPro" id="IPR050075">
    <property type="entry name" value="LeuD"/>
</dbReference>
<dbReference type="NCBIfam" id="TIGR00171">
    <property type="entry name" value="leuD"/>
    <property type="match status" value="1"/>
</dbReference>
<dbReference type="NCBIfam" id="NF002458">
    <property type="entry name" value="PRK01641.1"/>
    <property type="match status" value="1"/>
</dbReference>
<dbReference type="PANTHER" id="PTHR43345:SF5">
    <property type="entry name" value="3-ISOPROPYLMALATE DEHYDRATASE SMALL SUBUNIT"/>
    <property type="match status" value="1"/>
</dbReference>
<dbReference type="PANTHER" id="PTHR43345">
    <property type="entry name" value="3-ISOPROPYLMALATE DEHYDRATASE SMALL SUBUNIT 2-RELATED-RELATED"/>
    <property type="match status" value="1"/>
</dbReference>
<dbReference type="Pfam" id="PF00694">
    <property type="entry name" value="Aconitase_C"/>
    <property type="match status" value="1"/>
</dbReference>
<dbReference type="SUPFAM" id="SSF52016">
    <property type="entry name" value="LeuD/IlvD-like"/>
    <property type="match status" value="1"/>
</dbReference>
<accession>A6W7Q8</accession>
<feature type="chain" id="PRO_1000084255" description="3-isopropylmalate dehydratase small subunit">
    <location>
        <begin position="1"/>
        <end position="201"/>
    </location>
</feature>
<gene>
    <name evidence="1" type="primary">leuD</name>
    <name type="ordered locus">Krad_1359</name>
</gene>
<reference key="1">
    <citation type="journal article" date="2008" name="PLoS ONE">
        <title>Survival in nuclear waste, extreme resistance, and potential applications gleaned from the genome sequence of Kineococcus radiotolerans SRS30216.</title>
        <authorList>
            <person name="Bagwell C.E."/>
            <person name="Bhat S."/>
            <person name="Hawkins G.M."/>
            <person name="Smith B.W."/>
            <person name="Biswas T."/>
            <person name="Hoover T.R."/>
            <person name="Saunders E."/>
            <person name="Han C.S."/>
            <person name="Tsodikov O.V."/>
            <person name="Shimkets L.J."/>
        </authorList>
    </citation>
    <scope>NUCLEOTIDE SEQUENCE [LARGE SCALE GENOMIC DNA]</scope>
    <source>
        <strain>ATCC BAA-149 / DSM 14245 / SRS30216</strain>
    </source>
</reference>
<evidence type="ECO:0000255" key="1">
    <source>
        <dbReference type="HAMAP-Rule" id="MF_01031"/>
    </source>
</evidence>
<name>LEUD_KINRD</name>
<protein>
    <recommendedName>
        <fullName evidence="1">3-isopropylmalate dehydratase small subunit</fullName>
        <ecNumber evidence="1">4.2.1.33</ecNumber>
    </recommendedName>
    <alternativeName>
        <fullName evidence="1">Alpha-IPM isomerase</fullName>
        <shortName evidence="1">IPMI</shortName>
    </alternativeName>
    <alternativeName>
        <fullName evidence="1">Isopropylmalate isomerase</fullName>
    </alternativeName>
</protein>
<organism>
    <name type="scientific">Kineococcus radiotolerans (strain ATCC BAA-149 / DSM 14245 / SRS30216)</name>
    <dbReference type="NCBI Taxonomy" id="266940"/>
    <lineage>
        <taxon>Bacteria</taxon>
        <taxon>Bacillati</taxon>
        <taxon>Actinomycetota</taxon>
        <taxon>Actinomycetes</taxon>
        <taxon>Kineosporiales</taxon>
        <taxon>Kineosporiaceae</taxon>
        <taxon>Kineococcus</taxon>
    </lineage>
</organism>
<sequence>MEKFSVHRGVGVPMRRTDVDTDQIIPAVYLKRVTKTGFEDALFAGWRKDPGFVLNQEPYRPGSVLVAGQDFGTGSSREHAVWALRDYGFRAVLAPRFGDIFRGNAGKQGLLAAVVAQSDIDLIWKALEAHPGTEVTVDLIERIVQVDDFTAPFEVDDYVRWRLVEGLDDIGLTLRHADAITDFEARRPSFKPTTTPLAPSA</sequence>
<keyword id="KW-0028">Amino-acid biosynthesis</keyword>
<keyword id="KW-0100">Branched-chain amino acid biosynthesis</keyword>
<keyword id="KW-0432">Leucine biosynthesis</keyword>
<keyword id="KW-0456">Lyase</keyword>
<keyword id="KW-1185">Reference proteome</keyword>
<comment type="function">
    <text evidence="1">Catalyzes the isomerization between 2-isopropylmalate and 3-isopropylmalate, via the formation of 2-isopropylmaleate.</text>
</comment>
<comment type="catalytic activity">
    <reaction evidence="1">
        <text>(2R,3S)-3-isopropylmalate = (2S)-2-isopropylmalate</text>
        <dbReference type="Rhea" id="RHEA:32287"/>
        <dbReference type="ChEBI" id="CHEBI:1178"/>
        <dbReference type="ChEBI" id="CHEBI:35121"/>
        <dbReference type="EC" id="4.2.1.33"/>
    </reaction>
</comment>
<comment type="pathway">
    <text evidence="1">Amino-acid biosynthesis; L-leucine biosynthesis; L-leucine from 3-methyl-2-oxobutanoate: step 2/4.</text>
</comment>
<comment type="subunit">
    <text evidence="1">Heterodimer of LeuC and LeuD.</text>
</comment>
<comment type="similarity">
    <text evidence="1">Belongs to the LeuD family. LeuD type 1 subfamily.</text>
</comment>
<proteinExistence type="inferred from homology"/>